<name>YIBN_ECOL6</name>
<evidence type="ECO:0000250" key="1"/>
<evidence type="ECO:0000255" key="2">
    <source>
        <dbReference type="PROSITE-ProRule" id="PRU00173"/>
    </source>
</evidence>
<evidence type="ECO:0000305" key="3"/>
<reference key="1">
    <citation type="journal article" date="2002" name="Proc. Natl. Acad. Sci. U.S.A.">
        <title>Extensive mosaic structure revealed by the complete genome sequence of uropathogenic Escherichia coli.</title>
        <authorList>
            <person name="Welch R.A."/>
            <person name="Burland V."/>
            <person name="Plunkett G. III"/>
            <person name="Redford P."/>
            <person name="Roesch P."/>
            <person name="Rasko D."/>
            <person name="Buckles E.L."/>
            <person name="Liou S.-R."/>
            <person name="Boutin A."/>
            <person name="Hackett J."/>
            <person name="Stroud D."/>
            <person name="Mayhew G.F."/>
            <person name="Rose D.J."/>
            <person name="Zhou S."/>
            <person name="Schwartz D.C."/>
            <person name="Perna N.T."/>
            <person name="Mobley H.L.T."/>
            <person name="Donnenberg M.S."/>
            <person name="Blattner F.R."/>
        </authorList>
    </citation>
    <scope>NUCLEOTIDE SEQUENCE [LARGE SCALE GENOMIC DNA]</scope>
    <source>
        <strain>CFT073 / ATCC 700928 / UPEC</strain>
    </source>
</reference>
<keyword id="KW-0007">Acetylation</keyword>
<keyword id="KW-1185">Reference proteome</keyword>
<organism>
    <name type="scientific">Escherichia coli O6:H1 (strain CFT073 / ATCC 700928 / UPEC)</name>
    <dbReference type="NCBI Taxonomy" id="199310"/>
    <lineage>
        <taxon>Bacteria</taxon>
        <taxon>Pseudomonadati</taxon>
        <taxon>Pseudomonadota</taxon>
        <taxon>Gammaproteobacteria</taxon>
        <taxon>Enterobacterales</taxon>
        <taxon>Enterobacteriaceae</taxon>
        <taxon>Escherichia</taxon>
    </lineage>
</organism>
<gene>
    <name type="primary">yibN</name>
    <name type="ordered locus">c4436</name>
</gene>
<accession>P0AG28</accession>
<accession>P37688</accession>
<protein>
    <recommendedName>
        <fullName>Uncharacterized protein YibN</fullName>
    </recommendedName>
</protein>
<dbReference type="EMBL" id="AE014075">
    <property type="protein sequence ID" value="AAN82872.1"/>
    <property type="status" value="ALT_INIT"/>
    <property type="molecule type" value="Genomic_DNA"/>
</dbReference>
<dbReference type="RefSeq" id="WP_001156181.1">
    <property type="nucleotide sequence ID" value="NZ_CP051263.1"/>
</dbReference>
<dbReference type="SMR" id="P0AG28"/>
<dbReference type="STRING" id="199310.c4436"/>
<dbReference type="KEGG" id="ecc:c4436"/>
<dbReference type="eggNOG" id="COG0607">
    <property type="taxonomic scope" value="Bacteria"/>
</dbReference>
<dbReference type="HOGENOM" id="CLU_089574_1_5_6"/>
<dbReference type="Proteomes" id="UP000001410">
    <property type="component" value="Chromosome"/>
</dbReference>
<dbReference type="CDD" id="cd00158">
    <property type="entry name" value="RHOD"/>
    <property type="match status" value="1"/>
</dbReference>
<dbReference type="FunFam" id="3.40.250.10:FF:000005">
    <property type="entry name" value="Rhodanese-like domain-containing protein"/>
    <property type="match status" value="1"/>
</dbReference>
<dbReference type="Gene3D" id="3.40.250.10">
    <property type="entry name" value="Rhodanese-like domain"/>
    <property type="match status" value="1"/>
</dbReference>
<dbReference type="InterPro" id="IPR050229">
    <property type="entry name" value="GlpE_sulfurtransferase"/>
</dbReference>
<dbReference type="InterPro" id="IPR001763">
    <property type="entry name" value="Rhodanese-like_dom"/>
</dbReference>
<dbReference type="InterPro" id="IPR036873">
    <property type="entry name" value="Rhodanese-like_dom_sf"/>
</dbReference>
<dbReference type="PANTHER" id="PTHR43031">
    <property type="entry name" value="FAD-DEPENDENT OXIDOREDUCTASE"/>
    <property type="match status" value="1"/>
</dbReference>
<dbReference type="PANTHER" id="PTHR43031:SF18">
    <property type="entry name" value="RHODANESE-RELATED SULFURTRANSFERASES"/>
    <property type="match status" value="1"/>
</dbReference>
<dbReference type="Pfam" id="PF00581">
    <property type="entry name" value="Rhodanese"/>
    <property type="match status" value="1"/>
</dbReference>
<dbReference type="SMART" id="SM00450">
    <property type="entry name" value="RHOD"/>
    <property type="match status" value="1"/>
</dbReference>
<dbReference type="SUPFAM" id="SSF52821">
    <property type="entry name" value="Rhodanese/Cell cycle control phosphatase"/>
    <property type="match status" value="1"/>
</dbReference>
<dbReference type="PROSITE" id="PS50206">
    <property type="entry name" value="RHODANESE_3"/>
    <property type="match status" value="1"/>
</dbReference>
<proteinExistence type="inferred from homology"/>
<comment type="sequence caution" evidence="3">
    <conflict type="erroneous initiation">
        <sequence resource="EMBL-CDS" id="AAN82872"/>
    </conflict>
</comment>
<sequence>MQEIMQFVGRHPILSIAWIALLVAVLVTTFKSLTSKVKVITRGEATRLINKEDAVVVDLRQRDDFRKGHIAGSINLLPSEIKANNVGELEKHKDKPVIVVDGSGMQCQEPANALTKAGFAQVFVLKEGVAGWAGENLPLVRGK</sequence>
<feature type="chain" id="PRO_0000139426" description="Uncharacterized protein YibN">
    <location>
        <begin position="1"/>
        <end position="143"/>
    </location>
</feature>
<feature type="domain" description="Rhodanese" evidence="2">
    <location>
        <begin position="50"/>
        <end position="143"/>
    </location>
</feature>
<feature type="modified residue" description="N6-acetyllysine" evidence="1">
    <location>
        <position position="91"/>
    </location>
</feature>